<comment type="function">
    <text evidence="1">Component of the sulfite reductase complex that catalyzes the 6-electron reduction of sulfite to sulfide. This is one of several activities required for the biosynthesis of L-cysteine from sulfate. The flavoprotein component catalyzes the electron flow from NADPH -&gt; FAD -&gt; FMN to the hemoprotein component.</text>
</comment>
<comment type="catalytic activity">
    <reaction evidence="1">
        <text>hydrogen sulfide + 3 NADP(+) + 3 H2O = sulfite + 3 NADPH + 4 H(+)</text>
        <dbReference type="Rhea" id="RHEA:13801"/>
        <dbReference type="ChEBI" id="CHEBI:15377"/>
        <dbReference type="ChEBI" id="CHEBI:15378"/>
        <dbReference type="ChEBI" id="CHEBI:17359"/>
        <dbReference type="ChEBI" id="CHEBI:29919"/>
        <dbReference type="ChEBI" id="CHEBI:57783"/>
        <dbReference type="ChEBI" id="CHEBI:58349"/>
        <dbReference type="EC" id="1.8.1.2"/>
    </reaction>
</comment>
<comment type="cofactor">
    <cofactor evidence="1">
        <name>FAD</name>
        <dbReference type="ChEBI" id="CHEBI:57692"/>
    </cofactor>
    <text evidence="1">Binds 1 FAD per subunit.</text>
</comment>
<comment type="cofactor">
    <cofactor evidence="1">
        <name>FMN</name>
        <dbReference type="ChEBI" id="CHEBI:58210"/>
    </cofactor>
    <text evidence="1">Binds 1 FMN per subunit.</text>
</comment>
<comment type="pathway">
    <text evidence="1">Sulfur metabolism; hydrogen sulfide biosynthesis; hydrogen sulfide from sulfite (NADPH route): step 1/1.</text>
</comment>
<comment type="subunit">
    <text evidence="1">Alpha(8)-beta(8). The alpha component is a flavoprotein, the beta component is a hemoprotein.</text>
</comment>
<comment type="similarity">
    <text evidence="1">Belongs to the NADPH-dependent sulphite reductase flavoprotein subunit CysJ family.</text>
</comment>
<comment type="similarity">
    <text evidence="1">In the N-terminal section; belongs to the flavodoxin family.</text>
</comment>
<comment type="similarity">
    <text evidence="1">In the C-terminal section; belongs to the flavoprotein pyridine nucleotide cytochrome reductase family.</text>
</comment>
<sequence>MLLKELSSLASPLSQPQVEKLKQLTAELNAVQLAWVSGYLAATANASGNLAQLAPVSDAQAAQTVTILYGSQTGNGRGIAKALAEKAKAQGYSVNLASMGEYNVRQLKQETLLLLVVSTHGEGEAPDDAIELHKFLASKRAPQLNNLHYSVLALGDSSYEFFCQTGKDFDARLSALGAKALLPLVECDVDYEAAAGQWHADVLSAVKPLIQTTANVVALNDTSSALAASESEFTKQNPYSAEVLVSQKITGRGSDRDVRHVEIDLGESGLRYEVGDALGVWFSNNETLVDEILAGLGLAADTKVTVANESISLKQALIEKKELTQLYPGLVKAWAELSASPELLALSEDKEQVRQFILHHQFADLVANYQLKADANLDANKLVELLRPLTPRLYSIASSQSEVDTEVHLTVALVEDEHQGQARFGGASHFLASAEEGAEVKVYVEPNKHFRLPEDPQTPVIMIGPGTGVAPFRAFMQERVAQGAEGDSWLFFGNPHFEQDFLYQTEWQQYLKNGDLTRIDVAFSRDQAHKIYVQHRIKEQGQTLWQWLQNGAHLYICGDAERMAKDVHQALLGVAVEFGGLSSEAAEEYFETLRSHKRYQKDVY</sequence>
<gene>
    <name evidence="1" type="primary">cysJ</name>
    <name type="ordered locus">Shewmr4_3080</name>
</gene>
<protein>
    <recommendedName>
        <fullName evidence="1">Sulfite reductase [NADPH] flavoprotein alpha-component</fullName>
        <shortName evidence="1">SiR-FP</shortName>
        <ecNumber evidence="1">1.8.1.2</ecNumber>
    </recommendedName>
</protein>
<name>CYSJ_SHESM</name>
<accession>Q0HFL6</accession>
<dbReference type="EC" id="1.8.1.2" evidence="1"/>
<dbReference type="EMBL" id="CP000446">
    <property type="protein sequence ID" value="ABI40151.1"/>
    <property type="molecule type" value="Genomic_DNA"/>
</dbReference>
<dbReference type="RefSeq" id="WP_011623824.1">
    <property type="nucleotide sequence ID" value="NC_008321.1"/>
</dbReference>
<dbReference type="SMR" id="Q0HFL6"/>
<dbReference type="KEGG" id="she:Shewmr4_3080"/>
<dbReference type="HOGENOM" id="CLU_001570_17_7_6"/>
<dbReference type="UniPathway" id="UPA00140">
    <property type="reaction ID" value="UER00207"/>
</dbReference>
<dbReference type="GO" id="GO:0005829">
    <property type="term" value="C:cytosol"/>
    <property type="evidence" value="ECO:0007669"/>
    <property type="project" value="TreeGrafter"/>
</dbReference>
<dbReference type="GO" id="GO:0050660">
    <property type="term" value="F:flavin adenine dinucleotide binding"/>
    <property type="evidence" value="ECO:0007669"/>
    <property type="project" value="InterPro"/>
</dbReference>
<dbReference type="GO" id="GO:0010181">
    <property type="term" value="F:FMN binding"/>
    <property type="evidence" value="ECO:0007669"/>
    <property type="project" value="InterPro"/>
</dbReference>
<dbReference type="GO" id="GO:0004783">
    <property type="term" value="F:sulfite reductase (NADPH) activity"/>
    <property type="evidence" value="ECO:0007669"/>
    <property type="project" value="UniProtKB-UniRule"/>
</dbReference>
<dbReference type="GO" id="GO:0019344">
    <property type="term" value="P:cysteine biosynthetic process"/>
    <property type="evidence" value="ECO:0007669"/>
    <property type="project" value="UniProtKB-KW"/>
</dbReference>
<dbReference type="GO" id="GO:0070814">
    <property type="term" value="P:hydrogen sulfide biosynthetic process"/>
    <property type="evidence" value="ECO:0007669"/>
    <property type="project" value="UniProtKB-UniRule"/>
</dbReference>
<dbReference type="GO" id="GO:0000103">
    <property type="term" value="P:sulfate assimilation"/>
    <property type="evidence" value="ECO:0007669"/>
    <property type="project" value="UniProtKB-UniRule"/>
</dbReference>
<dbReference type="CDD" id="cd06199">
    <property type="entry name" value="SiR"/>
    <property type="match status" value="1"/>
</dbReference>
<dbReference type="FunFam" id="3.40.50.80:FF:000001">
    <property type="entry name" value="NADPH--cytochrome P450 reductase 1"/>
    <property type="match status" value="1"/>
</dbReference>
<dbReference type="FunFam" id="3.40.50.360:FF:000018">
    <property type="entry name" value="Sulfite reductase [NADPH] flavoprotein alpha-component"/>
    <property type="match status" value="1"/>
</dbReference>
<dbReference type="Gene3D" id="3.40.50.360">
    <property type="match status" value="1"/>
</dbReference>
<dbReference type="Gene3D" id="1.20.990.10">
    <property type="entry name" value="NADPH-cytochrome p450 Reductase, Chain A, domain 3"/>
    <property type="match status" value="1"/>
</dbReference>
<dbReference type="Gene3D" id="3.40.50.80">
    <property type="entry name" value="Nucleotide-binding domain of ferredoxin-NADP reductase (FNR) module"/>
    <property type="match status" value="1"/>
</dbReference>
<dbReference type="Gene3D" id="2.40.30.10">
    <property type="entry name" value="Translation factors"/>
    <property type="match status" value="1"/>
</dbReference>
<dbReference type="HAMAP" id="MF_01541">
    <property type="entry name" value="CysJ"/>
    <property type="match status" value="1"/>
</dbReference>
<dbReference type="InterPro" id="IPR010199">
    <property type="entry name" value="CysJ"/>
</dbReference>
<dbReference type="InterPro" id="IPR003097">
    <property type="entry name" value="CysJ-like_FAD-binding"/>
</dbReference>
<dbReference type="InterPro" id="IPR029758">
    <property type="entry name" value="CysJ_Proteobact"/>
</dbReference>
<dbReference type="InterPro" id="IPR017927">
    <property type="entry name" value="FAD-bd_FR_type"/>
</dbReference>
<dbReference type="InterPro" id="IPR001094">
    <property type="entry name" value="Flavdoxin-like"/>
</dbReference>
<dbReference type="InterPro" id="IPR008254">
    <property type="entry name" value="Flavodoxin/NO_synth"/>
</dbReference>
<dbReference type="InterPro" id="IPR001709">
    <property type="entry name" value="Flavoprot_Pyr_Nucl_cyt_Rdtase"/>
</dbReference>
<dbReference type="InterPro" id="IPR029039">
    <property type="entry name" value="Flavoprotein-like_sf"/>
</dbReference>
<dbReference type="InterPro" id="IPR039261">
    <property type="entry name" value="FNR_nucleotide-bd"/>
</dbReference>
<dbReference type="InterPro" id="IPR023173">
    <property type="entry name" value="NADPH_Cyt_P450_Rdtase_alpha"/>
</dbReference>
<dbReference type="InterPro" id="IPR001433">
    <property type="entry name" value="OxRdtase_FAD/NAD-bd"/>
</dbReference>
<dbReference type="InterPro" id="IPR017938">
    <property type="entry name" value="Riboflavin_synthase-like_b-brl"/>
</dbReference>
<dbReference type="NCBIfam" id="TIGR01931">
    <property type="entry name" value="cysJ"/>
    <property type="match status" value="1"/>
</dbReference>
<dbReference type="PANTHER" id="PTHR19384:SF128">
    <property type="entry name" value="NADPH OXIDOREDUCTASE A"/>
    <property type="match status" value="1"/>
</dbReference>
<dbReference type="PANTHER" id="PTHR19384">
    <property type="entry name" value="NITRIC OXIDE SYNTHASE-RELATED"/>
    <property type="match status" value="1"/>
</dbReference>
<dbReference type="Pfam" id="PF00667">
    <property type="entry name" value="FAD_binding_1"/>
    <property type="match status" value="1"/>
</dbReference>
<dbReference type="Pfam" id="PF00258">
    <property type="entry name" value="Flavodoxin_1"/>
    <property type="match status" value="1"/>
</dbReference>
<dbReference type="Pfam" id="PF00175">
    <property type="entry name" value="NAD_binding_1"/>
    <property type="match status" value="1"/>
</dbReference>
<dbReference type="PIRSF" id="PIRSF000207">
    <property type="entry name" value="SiR-FP_CysJ"/>
    <property type="match status" value="1"/>
</dbReference>
<dbReference type="PRINTS" id="PR00369">
    <property type="entry name" value="FLAVODOXIN"/>
</dbReference>
<dbReference type="PRINTS" id="PR00371">
    <property type="entry name" value="FPNCR"/>
</dbReference>
<dbReference type="SUPFAM" id="SSF52343">
    <property type="entry name" value="Ferredoxin reductase-like, C-terminal NADP-linked domain"/>
    <property type="match status" value="1"/>
</dbReference>
<dbReference type="SUPFAM" id="SSF52218">
    <property type="entry name" value="Flavoproteins"/>
    <property type="match status" value="1"/>
</dbReference>
<dbReference type="SUPFAM" id="SSF63380">
    <property type="entry name" value="Riboflavin synthase domain-like"/>
    <property type="match status" value="1"/>
</dbReference>
<dbReference type="PROSITE" id="PS51384">
    <property type="entry name" value="FAD_FR"/>
    <property type="match status" value="1"/>
</dbReference>
<dbReference type="PROSITE" id="PS50902">
    <property type="entry name" value="FLAVODOXIN_LIKE"/>
    <property type="match status" value="1"/>
</dbReference>
<feature type="chain" id="PRO_0000292971" description="Sulfite reductase [NADPH] flavoprotein alpha-component">
    <location>
        <begin position="1"/>
        <end position="604"/>
    </location>
</feature>
<feature type="domain" description="Flavodoxin-like" evidence="1">
    <location>
        <begin position="65"/>
        <end position="203"/>
    </location>
</feature>
<feature type="domain" description="FAD-binding FR-type" evidence="1">
    <location>
        <begin position="236"/>
        <end position="453"/>
    </location>
</feature>
<feature type="binding site" evidence="1">
    <location>
        <begin position="71"/>
        <end position="76"/>
    </location>
    <ligand>
        <name>FMN</name>
        <dbReference type="ChEBI" id="CHEBI:58210"/>
    </ligand>
</feature>
<feature type="binding site" evidence="1">
    <location>
        <begin position="118"/>
        <end position="121"/>
    </location>
    <ligand>
        <name>FMN</name>
        <dbReference type="ChEBI" id="CHEBI:58210"/>
    </ligand>
</feature>
<feature type="binding site" evidence="1">
    <location>
        <begin position="154"/>
        <end position="163"/>
    </location>
    <ligand>
        <name>FMN</name>
        <dbReference type="ChEBI" id="CHEBI:58210"/>
    </ligand>
</feature>
<feature type="binding site" evidence="1">
    <location>
        <position position="324"/>
    </location>
    <ligand>
        <name>FAD</name>
        <dbReference type="ChEBI" id="CHEBI:57692"/>
    </ligand>
</feature>
<feature type="binding site" evidence="1">
    <location>
        <position position="358"/>
    </location>
    <ligand>
        <name>FAD</name>
        <dbReference type="ChEBI" id="CHEBI:57692"/>
    </ligand>
</feature>
<feature type="binding site" evidence="1">
    <location>
        <begin position="392"/>
        <end position="395"/>
    </location>
    <ligand>
        <name>FAD</name>
        <dbReference type="ChEBI" id="CHEBI:57692"/>
    </ligand>
</feature>
<feature type="binding site" evidence="1">
    <location>
        <begin position="410"/>
        <end position="412"/>
    </location>
    <ligand>
        <name>FAD</name>
        <dbReference type="ChEBI" id="CHEBI:57692"/>
    </ligand>
</feature>
<feature type="binding site" evidence="1">
    <location>
        <begin position="425"/>
        <end position="428"/>
    </location>
    <ligand>
        <name>FAD</name>
        <dbReference type="ChEBI" id="CHEBI:57692"/>
    </ligand>
</feature>
<feature type="binding site" evidence="1">
    <location>
        <begin position="524"/>
        <end position="525"/>
    </location>
    <ligand>
        <name>NADP(+)</name>
        <dbReference type="ChEBI" id="CHEBI:58349"/>
    </ligand>
</feature>
<feature type="binding site" evidence="1">
    <location>
        <begin position="530"/>
        <end position="534"/>
    </location>
    <ligand>
        <name>NADP(+)</name>
        <dbReference type="ChEBI" id="CHEBI:58349"/>
    </ligand>
</feature>
<feature type="binding site" evidence="1">
    <location>
        <position position="566"/>
    </location>
    <ligand>
        <name>NADP(+)</name>
        <dbReference type="ChEBI" id="CHEBI:58349"/>
    </ligand>
</feature>
<feature type="binding site" evidence="1">
    <location>
        <position position="604"/>
    </location>
    <ligand>
        <name>FAD</name>
        <dbReference type="ChEBI" id="CHEBI:57692"/>
    </ligand>
</feature>
<organism>
    <name type="scientific">Shewanella sp. (strain MR-4)</name>
    <dbReference type="NCBI Taxonomy" id="60480"/>
    <lineage>
        <taxon>Bacteria</taxon>
        <taxon>Pseudomonadati</taxon>
        <taxon>Pseudomonadota</taxon>
        <taxon>Gammaproteobacteria</taxon>
        <taxon>Alteromonadales</taxon>
        <taxon>Shewanellaceae</taxon>
        <taxon>Shewanella</taxon>
    </lineage>
</organism>
<reference key="1">
    <citation type="submission" date="2006-08" db="EMBL/GenBank/DDBJ databases">
        <title>Complete sequence of Shewanella sp. MR-4.</title>
        <authorList>
            <consortium name="US DOE Joint Genome Institute"/>
            <person name="Copeland A."/>
            <person name="Lucas S."/>
            <person name="Lapidus A."/>
            <person name="Barry K."/>
            <person name="Detter J.C."/>
            <person name="Glavina del Rio T."/>
            <person name="Hammon N."/>
            <person name="Israni S."/>
            <person name="Dalin E."/>
            <person name="Tice H."/>
            <person name="Pitluck S."/>
            <person name="Kiss H."/>
            <person name="Brettin T."/>
            <person name="Bruce D."/>
            <person name="Han C."/>
            <person name="Tapia R."/>
            <person name="Gilna P."/>
            <person name="Schmutz J."/>
            <person name="Larimer F."/>
            <person name="Land M."/>
            <person name="Hauser L."/>
            <person name="Kyrpides N."/>
            <person name="Mikhailova N."/>
            <person name="Nealson K."/>
            <person name="Konstantinidis K."/>
            <person name="Klappenbach J."/>
            <person name="Tiedje J."/>
            <person name="Richardson P."/>
        </authorList>
    </citation>
    <scope>NUCLEOTIDE SEQUENCE [LARGE SCALE GENOMIC DNA]</scope>
    <source>
        <strain>MR-4</strain>
    </source>
</reference>
<proteinExistence type="inferred from homology"/>
<evidence type="ECO:0000255" key="1">
    <source>
        <dbReference type="HAMAP-Rule" id="MF_01541"/>
    </source>
</evidence>
<keyword id="KW-0028">Amino-acid biosynthesis</keyword>
<keyword id="KW-0198">Cysteine biosynthesis</keyword>
<keyword id="KW-0249">Electron transport</keyword>
<keyword id="KW-0274">FAD</keyword>
<keyword id="KW-0285">Flavoprotein</keyword>
<keyword id="KW-0288">FMN</keyword>
<keyword id="KW-0521">NADP</keyword>
<keyword id="KW-0560">Oxidoreductase</keyword>
<keyword id="KW-0813">Transport</keyword>